<dbReference type="EMBL" id="AL939125">
    <property type="protein sequence ID" value="CAA15876.1"/>
    <property type="molecule type" value="Genomic_DNA"/>
</dbReference>
<dbReference type="PIR" id="T35140">
    <property type="entry name" value="T35140"/>
</dbReference>
<dbReference type="RefSeq" id="NP_629895.1">
    <property type="nucleotide sequence ID" value="NC_003888.3"/>
</dbReference>
<dbReference type="SMR" id="O50488"/>
<dbReference type="STRING" id="100226.gene:17763430"/>
<dbReference type="PaxDb" id="100226-SCO5770"/>
<dbReference type="KEGG" id="sco:SCO5770"/>
<dbReference type="PATRIC" id="fig|100226.15.peg.5859"/>
<dbReference type="eggNOG" id="COG2137">
    <property type="taxonomic scope" value="Bacteria"/>
</dbReference>
<dbReference type="HOGENOM" id="CLU_066607_0_2_11"/>
<dbReference type="InParanoid" id="O50488"/>
<dbReference type="OrthoDB" id="5244465at2"/>
<dbReference type="PhylomeDB" id="O50488"/>
<dbReference type="Proteomes" id="UP000001973">
    <property type="component" value="Chromosome"/>
</dbReference>
<dbReference type="GO" id="GO:0005737">
    <property type="term" value="C:cytoplasm"/>
    <property type="evidence" value="ECO:0007669"/>
    <property type="project" value="UniProtKB-SubCell"/>
</dbReference>
<dbReference type="GO" id="GO:0006282">
    <property type="term" value="P:regulation of DNA repair"/>
    <property type="evidence" value="ECO:0007669"/>
    <property type="project" value="UniProtKB-UniRule"/>
</dbReference>
<dbReference type="Gene3D" id="1.10.10.10">
    <property type="entry name" value="Winged helix-like DNA-binding domain superfamily/Winged helix DNA-binding domain"/>
    <property type="match status" value="2"/>
</dbReference>
<dbReference type="HAMAP" id="MF_01114">
    <property type="entry name" value="RecX"/>
    <property type="match status" value="1"/>
</dbReference>
<dbReference type="InterPro" id="IPR053926">
    <property type="entry name" value="RecX_HTH_1st"/>
</dbReference>
<dbReference type="InterPro" id="IPR053924">
    <property type="entry name" value="RecX_HTH_2nd"/>
</dbReference>
<dbReference type="InterPro" id="IPR053925">
    <property type="entry name" value="RecX_HTH_3rd"/>
</dbReference>
<dbReference type="InterPro" id="IPR003783">
    <property type="entry name" value="Regulatory_RecX"/>
</dbReference>
<dbReference type="InterPro" id="IPR036388">
    <property type="entry name" value="WH-like_DNA-bd_sf"/>
</dbReference>
<dbReference type="NCBIfam" id="NF001061">
    <property type="entry name" value="PRK00117.5-1"/>
    <property type="match status" value="1"/>
</dbReference>
<dbReference type="PANTHER" id="PTHR33602">
    <property type="entry name" value="REGULATORY PROTEIN RECX FAMILY PROTEIN"/>
    <property type="match status" value="1"/>
</dbReference>
<dbReference type="PANTHER" id="PTHR33602:SF1">
    <property type="entry name" value="REGULATORY PROTEIN RECX FAMILY PROTEIN"/>
    <property type="match status" value="1"/>
</dbReference>
<dbReference type="Pfam" id="PF21982">
    <property type="entry name" value="RecX_HTH1"/>
    <property type="match status" value="1"/>
</dbReference>
<dbReference type="Pfam" id="PF02631">
    <property type="entry name" value="RecX_HTH2"/>
    <property type="match status" value="1"/>
</dbReference>
<dbReference type="Pfam" id="PF21981">
    <property type="entry name" value="RecX_HTH3"/>
    <property type="match status" value="1"/>
</dbReference>
<protein>
    <recommendedName>
        <fullName>Regulatory protein RecX</fullName>
    </recommendedName>
</protein>
<name>RECX_STRCO</name>
<accession>O50488</accession>
<evidence type="ECO:0000250" key="1"/>
<evidence type="ECO:0000256" key="2">
    <source>
        <dbReference type="SAM" id="MobiDB-lite"/>
    </source>
</evidence>
<evidence type="ECO:0000305" key="3"/>
<feature type="chain" id="PRO_0000162479" description="Regulatory protein RecX">
    <location>
        <begin position="1"/>
        <end position="188"/>
    </location>
</feature>
<feature type="region of interest" description="Disordered" evidence="2">
    <location>
        <begin position="1"/>
        <end position="28"/>
    </location>
</feature>
<feature type="compositionally biased region" description="Basic and acidic residues" evidence="2">
    <location>
        <begin position="15"/>
        <end position="27"/>
    </location>
</feature>
<proteinExistence type="inferred from homology"/>
<keyword id="KW-0963">Cytoplasm</keyword>
<keyword id="KW-1185">Reference proteome</keyword>
<gene>
    <name type="primary">recX</name>
    <name type="ordered locus">SCO5770</name>
    <name type="ORF">SC4H8.09</name>
</gene>
<reference key="1">
    <citation type="journal article" date="2002" name="Nature">
        <title>Complete genome sequence of the model actinomycete Streptomyces coelicolor A3(2).</title>
        <authorList>
            <person name="Bentley S.D."/>
            <person name="Chater K.F."/>
            <person name="Cerdeno-Tarraga A.-M."/>
            <person name="Challis G.L."/>
            <person name="Thomson N.R."/>
            <person name="James K.D."/>
            <person name="Harris D.E."/>
            <person name="Quail M.A."/>
            <person name="Kieser H."/>
            <person name="Harper D."/>
            <person name="Bateman A."/>
            <person name="Brown S."/>
            <person name="Chandra G."/>
            <person name="Chen C.W."/>
            <person name="Collins M."/>
            <person name="Cronin A."/>
            <person name="Fraser A."/>
            <person name="Goble A."/>
            <person name="Hidalgo J."/>
            <person name="Hornsby T."/>
            <person name="Howarth S."/>
            <person name="Huang C.-H."/>
            <person name="Kieser T."/>
            <person name="Larke L."/>
            <person name="Murphy L.D."/>
            <person name="Oliver K."/>
            <person name="O'Neil S."/>
            <person name="Rabbinowitsch E."/>
            <person name="Rajandream M.A."/>
            <person name="Rutherford K.M."/>
            <person name="Rutter S."/>
            <person name="Seeger K."/>
            <person name="Saunders D."/>
            <person name="Sharp S."/>
            <person name="Squares R."/>
            <person name="Squares S."/>
            <person name="Taylor K."/>
            <person name="Warren T."/>
            <person name="Wietzorrek A."/>
            <person name="Woodward J.R."/>
            <person name="Barrell B.G."/>
            <person name="Parkhill J."/>
            <person name="Hopwood D.A."/>
        </authorList>
    </citation>
    <scope>NUCLEOTIDE SEQUENCE [LARGE SCALE GENOMIC DNA]</scope>
    <source>
        <strain>ATCC BAA-471 / A3(2) / M145</strain>
    </source>
</reference>
<comment type="function">
    <text evidence="1">Modulates RecA activity.</text>
</comment>
<comment type="subcellular location">
    <subcellularLocation>
        <location evidence="3">Cytoplasm</location>
    </subcellularLocation>
</comment>
<comment type="similarity">
    <text evidence="3">Belongs to the RecX family.</text>
</comment>
<sequence length="188" mass="20922">MEPSAEDGGATSSSRAEKGEPPRDPVEQARAICLRLLTGTPRTRRQLAEALRKREIPEEAAEEVLSRFEEVGLINDGAFAQAWVESRHHGRGLARRALARELRTKGVEAALIDVAVSQLDTEQEEETARDLVARKLRATRGLDRDKRLRRLAGMLARKGYSEGMALRVVRQALEEEGEDTEHLGDEGF</sequence>
<organism>
    <name type="scientific">Streptomyces coelicolor (strain ATCC BAA-471 / A3(2) / M145)</name>
    <dbReference type="NCBI Taxonomy" id="100226"/>
    <lineage>
        <taxon>Bacteria</taxon>
        <taxon>Bacillati</taxon>
        <taxon>Actinomycetota</taxon>
        <taxon>Actinomycetes</taxon>
        <taxon>Kitasatosporales</taxon>
        <taxon>Streptomycetaceae</taxon>
        <taxon>Streptomyces</taxon>
        <taxon>Streptomyces albidoflavus group</taxon>
    </lineage>
</organism>